<gene>
    <name evidence="1" type="primary">ilvC</name>
    <name type="ordered locus">LEPBI_I0708</name>
</gene>
<comment type="function">
    <text evidence="1">Involved in the biosynthesis of branched-chain amino acids (BCAA). Catalyzes an alkyl-migration followed by a ketol-acid reduction of (S)-2-acetolactate (S2AL) to yield (R)-2,3-dihydroxy-isovalerate. In the isomerase reaction, S2AL is rearranged via a Mg-dependent methyl migration to produce 3-hydroxy-3-methyl-2-ketobutyrate (HMKB). In the reductase reaction, this 2-ketoacid undergoes a metal-dependent reduction by NADPH to yield (R)-2,3-dihydroxy-isovalerate.</text>
</comment>
<comment type="catalytic activity">
    <reaction evidence="1">
        <text>(2R)-2,3-dihydroxy-3-methylbutanoate + NADP(+) = (2S)-2-acetolactate + NADPH + H(+)</text>
        <dbReference type="Rhea" id="RHEA:22068"/>
        <dbReference type="ChEBI" id="CHEBI:15378"/>
        <dbReference type="ChEBI" id="CHEBI:49072"/>
        <dbReference type="ChEBI" id="CHEBI:57783"/>
        <dbReference type="ChEBI" id="CHEBI:58349"/>
        <dbReference type="ChEBI" id="CHEBI:58476"/>
        <dbReference type="EC" id="1.1.1.86"/>
    </reaction>
</comment>
<comment type="catalytic activity">
    <reaction evidence="1">
        <text>(2R,3R)-2,3-dihydroxy-3-methylpentanoate + NADP(+) = (S)-2-ethyl-2-hydroxy-3-oxobutanoate + NADPH + H(+)</text>
        <dbReference type="Rhea" id="RHEA:13493"/>
        <dbReference type="ChEBI" id="CHEBI:15378"/>
        <dbReference type="ChEBI" id="CHEBI:49256"/>
        <dbReference type="ChEBI" id="CHEBI:49258"/>
        <dbReference type="ChEBI" id="CHEBI:57783"/>
        <dbReference type="ChEBI" id="CHEBI:58349"/>
        <dbReference type="EC" id="1.1.1.86"/>
    </reaction>
</comment>
<comment type="cofactor">
    <cofactor evidence="1">
        <name>Mg(2+)</name>
        <dbReference type="ChEBI" id="CHEBI:18420"/>
    </cofactor>
    <text evidence="1">Binds 2 magnesium ions per subunit.</text>
</comment>
<comment type="pathway">
    <text evidence="1">Amino-acid biosynthesis; L-isoleucine biosynthesis; L-isoleucine from 2-oxobutanoate: step 2/4.</text>
</comment>
<comment type="pathway">
    <text evidence="1">Amino-acid biosynthesis; L-valine biosynthesis; L-valine from pyruvate: step 2/4.</text>
</comment>
<comment type="similarity">
    <text evidence="1">Belongs to the ketol-acid reductoisomerase family.</text>
</comment>
<organism>
    <name type="scientific">Leptospira biflexa serovar Patoc (strain Patoc 1 / ATCC 23582 / Paris)</name>
    <dbReference type="NCBI Taxonomy" id="456481"/>
    <lineage>
        <taxon>Bacteria</taxon>
        <taxon>Pseudomonadati</taxon>
        <taxon>Spirochaetota</taxon>
        <taxon>Spirochaetia</taxon>
        <taxon>Leptospirales</taxon>
        <taxon>Leptospiraceae</taxon>
        <taxon>Leptospira</taxon>
    </lineage>
</organism>
<feature type="chain" id="PRO_1000124303" description="Ketol-acid reductoisomerase (NADP(+))">
    <location>
        <begin position="1"/>
        <end position="333"/>
    </location>
</feature>
<feature type="domain" description="KARI N-terminal Rossmann" evidence="2">
    <location>
        <begin position="2"/>
        <end position="182"/>
    </location>
</feature>
<feature type="domain" description="KARI C-terminal knotted" evidence="3">
    <location>
        <begin position="183"/>
        <end position="331"/>
    </location>
</feature>
<feature type="active site" evidence="1">
    <location>
        <position position="108"/>
    </location>
</feature>
<feature type="binding site" evidence="1">
    <location>
        <begin position="25"/>
        <end position="28"/>
    </location>
    <ligand>
        <name>NADP(+)</name>
        <dbReference type="ChEBI" id="CHEBI:58349"/>
    </ligand>
</feature>
<feature type="binding site" evidence="1">
    <location>
        <position position="48"/>
    </location>
    <ligand>
        <name>NADP(+)</name>
        <dbReference type="ChEBI" id="CHEBI:58349"/>
    </ligand>
</feature>
<feature type="binding site" evidence="1">
    <location>
        <position position="51"/>
    </location>
    <ligand>
        <name>NADP(+)</name>
        <dbReference type="ChEBI" id="CHEBI:58349"/>
    </ligand>
</feature>
<feature type="binding site" evidence="1">
    <location>
        <position position="53"/>
    </location>
    <ligand>
        <name>NADP(+)</name>
        <dbReference type="ChEBI" id="CHEBI:58349"/>
    </ligand>
</feature>
<feature type="binding site" evidence="1">
    <location>
        <begin position="83"/>
        <end position="86"/>
    </location>
    <ligand>
        <name>NADP(+)</name>
        <dbReference type="ChEBI" id="CHEBI:58349"/>
    </ligand>
</feature>
<feature type="binding site" evidence="1">
    <location>
        <position position="134"/>
    </location>
    <ligand>
        <name>NADP(+)</name>
        <dbReference type="ChEBI" id="CHEBI:58349"/>
    </ligand>
</feature>
<feature type="binding site" evidence="1">
    <location>
        <position position="191"/>
    </location>
    <ligand>
        <name>Mg(2+)</name>
        <dbReference type="ChEBI" id="CHEBI:18420"/>
        <label>1</label>
    </ligand>
</feature>
<feature type="binding site" evidence="1">
    <location>
        <position position="191"/>
    </location>
    <ligand>
        <name>Mg(2+)</name>
        <dbReference type="ChEBI" id="CHEBI:18420"/>
        <label>2</label>
    </ligand>
</feature>
<feature type="binding site" evidence="1">
    <location>
        <position position="195"/>
    </location>
    <ligand>
        <name>Mg(2+)</name>
        <dbReference type="ChEBI" id="CHEBI:18420"/>
        <label>1</label>
    </ligand>
</feature>
<feature type="binding site" evidence="1">
    <location>
        <position position="227"/>
    </location>
    <ligand>
        <name>Mg(2+)</name>
        <dbReference type="ChEBI" id="CHEBI:18420"/>
        <label>2</label>
    </ligand>
</feature>
<feature type="binding site" evidence="1">
    <location>
        <position position="231"/>
    </location>
    <ligand>
        <name>Mg(2+)</name>
        <dbReference type="ChEBI" id="CHEBI:18420"/>
        <label>2</label>
    </ligand>
</feature>
<feature type="binding site" evidence="1">
    <location>
        <position position="252"/>
    </location>
    <ligand>
        <name>substrate</name>
    </ligand>
</feature>
<proteinExistence type="inferred from homology"/>
<name>ILVC_LEPBP</name>
<accession>B0SL33</accession>
<protein>
    <recommendedName>
        <fullName evidence="1">Ketol-acid reductoisomerase (NADP(+))</fullName>
        <shortName evidence="1">KARI</shortName>
        <ecNumber evidence="1">1.1.1.86</ecNumber>
    </recommendedName>
    <alternativeName>
        <fullName evidence="1">Acetohydroxy-acid isomeroreductase</fullName>
        <shortName evidence="1">AHIR</shortName>
    </alternativeName>
    <alternativeName>
        <fullName evidence="1">Alpha-keto-beta-hydroxylacyl reductoisomerase</fullName>
    </alternativeName>
    <alternativeName>
        <fullName evidence="1">Ketol-acid reductoisomerase type 1</fullName>
    </alternativeName>
    <alternativeName>
        <fullName evidence="1">Ketol-acid reductoisomerase type I</fullName>
    </alternativeName>
</protein>
<keyword id="KW-0028">Amino-acid biosynthesis</keyword>
<keyword id="KW-0100">Branched-chain amino acid biosynthesis</keyword>
<keyword id="KW-0460">Magnesium</keyword>
<keyword id="KW-0479">Metal-binding</keyword>
<keyword id="KW-0521">NADP</keyword>
<keyword id="KW-0560">Oxidoreductase</keyword>
<keyword id="KW-1185">Reference proteome</keyword>
<evidence type="ECO:0000255" key="1">
    <source>
        <dbReference type="HAMAP-Rule" id="MF_00435"/>
    </source>
</evidence>
<evidence type="ECO:0000255" key="2">
    <source>
        <dbReference type="PROSITE-ProRule" id="PRU01197"/>
    </source>
</evidence>
<evidence type="ECO:0000255" key="3">
    <source>
        <dbReference type="PROSITE-ProRule" id="PRU01198"/>
    </source>
</evidence>
<dbReference type="EC" id="1.1.1.86" evidence="1"/>
<dbReference type="EMBL" id="CP000786">
    <property type="protein sequence ID" value="ABZ96840.1"/>
    <property type="molecule type" value="Genomic_DNA"/>
</dbReference>
<dbReference type="RefSeq" id="WP_012387727.1">
    <property type="nucleotide sequence ID" value="NC_010602.1"/>
</dbReference>
<dbReference type="SMR" id="B0SL33"/>
<dbReference type="STRING" id="456481.LEPBI_I0708"/>
<dbReference type="KEGG" id="lbi:LEPBI_I0708"/>
<dbReference type="HOGENOM" id="CLU_033821_0_1_12"/>
<dbReference type="OrthoDB" id="9804088at2"/>
<dbReference type="BioCyc" id="LBIF456481:LEPBI_RS03490-MONOMER"/>
<dbReference type="UniPathway" id="UPA00047">
    <property type="reaction ID" value="UER00056"/>
</dbReference>
<dbReference type="UniPathway" id="UPA00049">
    <property type="reaction ID" value="UER00060"/>
</dbReference>
<dbReference type="Proteomes" id="UP000001847">
    <property type="component" value="Chromosome I"/>
</dbReference>
<dbReference type="GO" id="GO:0005829">
    <property type="term" value="C:cytosol"/>
    <property type="evidence" value="ECO:0007669"/>
    <property type="project" value="TreeGrafter"/>
</dbReference>
<dbReference type="GO" id="GO:0004455">
    <property type="term" value="F:ketol-acid reductoisomerase activity"/>
    <property type="evidence" value="ECO:0007669"/>
    <property type="project" value="UniProtKB-UniRule"/>
</dbReference>
<dbReference type="GO" id="GO:0000287">
    <property type="term" value="F:magnesium ion binding"/>
    <property type="evidence" value="ECO:0007669"/>
    <property type="project" value="UniProtKB-UniRule"/>
</dbReference>
<dbReference type="GO" id="GO:0050661">
    <property type="term" value="F:NADP binding"/>
    <property type="evidence" value="ECO:0007669"/>
    <property type="project" value="InterPro"/>
</dbReference>
<dbReference type="GO" id="GO:0009097">
    <property type="term" value="P:isoleucine biosynthetic process"/>
    <property type="evidence" value="ECO:0007669"/>
    <property type="project" value="UniProtKB-UniRule"/>
</dbReference>
<dbReference type="GO" id="GO:0009099">
    <property type="term" value="P:L-valine biosynthetic process"/>
    <property type="evidence" value="ECO:0007669"/>
    <property type="project" value="UniProtKB-UniRule"/>
</dbReference>
<dbReference type="FunFam" id="3.40.50.720:FF:000023">
    <property type="entry name" value="Ketol-acid reductoisomerase (NADP(+))"/>
    <property type="match status" value="1"/>
</dbReference>
<dbReference type="Gene3D" id="6.10.240.10">
    <property type="match status" value="1"/>
</dbReference>
<dbReference type="Gene3D" id="3.40.50.720">
    <property type="entry name" value="NAD(P)-binding Rossmann-like Domain"/>
    <property type="match status" value="1"/>
</dbReference>
<dbReference type="HAMAP" id="MF_00435">
    <property type="entry name" value="IlvC"/>
    <property type="match status" value="1"/>
</dbReference>
<dbReference type="InterPro" id="IPR008927">
    <property type="entry name" value="6-PGluconate_DH-like_C_sf"/>
</dbReference>
<dbReference type="InterPro" id="IPR013023">
    <property type="entry name" value="KARI"/>
</dbReference>
<dbReference type="InterPro" id="IPR000506">
    <property type="entry name" value="KARI_C"/>
</dbReference>
<dbReference type="InterPro" id="IPR013116">
    <property type="entry name" value="KARI_N"/>
</dbReference>
<dbReference type="InterPro" id="IPR014359">
    <property type="entry name" value="KARI_prok"/>
</dbReference>
<dbReference type="InterPro" id="IPR036291">
    <property type="entry name" value="NAD(P)-bd_dom_sf"/>
</dbReference>
<dbReference type="NCBIfam" id="TIGR00465">
    <property type="entry name" value="ilvC"/>
    <property type="match status" value="1"/>
</dbReference>
<dbReference type="NCBIfam" id="NF004017">
    <property type="entry name" value="PRK05479.1"/>
    <property type="match status" value="1"/>
</dbReference>
<dbReference type="NCBIfam" id="NF009940">
    <property type="entry name" value="PRK13403.1"/>
    <property type="match status" value="1"/>
</dbReference>
<dbReference type="PANTHER" id="PTHR21371">
    <property type="entry name" value="KETOL-ACID REDUCTOISOMERASE, MITOCHONDRIAL"/>
    <property type="match status" value="1"/>
</dbReference>
<dbReference type="PANTHER" id="PTHR21371:SF1">
    <property type="entry name" value="KETOL-ACID REDUCTOISOMERASE, MITOCHONDRIAL"/>
    <property type="match status" value="1"/>
</dbReference>
<dbReference type="Pfam" id="PF01450">
    <property type="entry name" value="KARI_C"/>
    <property type="match status" value="1"/>
</dbReference>
<dbReference type="Pfam" id="PF07991">
    <property type="entry name" value="KARI_N"/>
    <property type="match status" value="1"/>
</dbReference>
<dbReference type="PIRSF" id="PIRSF000116">
    <property type="entry name" value="IlvC_gammaproteo"/>
    <property type="match status" value="1"/>
</dbReference>
<dbReference type="SUPFAM" id="SSF48179">
    <property type="entry name" value="6-phosphogluconate dehydrogenase C-terminal domain-like"/>
    <property type="match status" value="1"/>
</dbReference>
<dbReference type="SUPFAM" id="SSF51735">
    <property type="entry name" value="NAD(P)-binding Rossmann-fold domains"/>
    <property type="match status" value="1"/>
</dbReference>
<dbReference type="PROSITE" id="PS51851">
    <property type="entry name" value="KARI_C"/>
    <property type="match status" value="1"/>
</dbReference>
<dbReference type="PROSITE" id="PS51850">
    <property type="entry name" value="KARI_N"/>
    <property type="match status" value="1"/>
</dbReference>
<reference key="1">
    <citation type="journal article" date="2008" name="PLoS ONE">
        <title>Genome sequence of the saprophyte Leptospira biflexa provides insights into the evolution of Leptospira and the pathogenesis of leptospirosis.</title>
        <authorList>
            <person name="Picardeau M."/>
            <person name="Bulach D.M."/>
            <person name="Bouchier C."/>
            <person name="Zuerner R.L."/>
            <person name="Zidane N."/>
            <person name="Wilson P.J."/>
            <person name="Creno S."/>
            <person name="Kuczek E.S."/>
            <person name="Bommezzadri S."/>
            <person name="Davis J.C."/>
            <person name="McGrath A."/>
            <person name="Johnson M.J."/>
            <person name="Boursaux-Eude C."/>
            <person name="Seemann T."/>
            <person name="Rouy Z."/>
            <person name="Coppel R.L."/>
            <person name="Rood J.I."/>
            <person name="Lajus A."/>
            <person name="Davies J.K."/>
            <person name="Medigue C."/>
            <person name="Adler B."/>
        </authorList>
    </citation>
    <scope>NUCLEOTIDE SEQUENCE [LARGE SCALE GENOMIC DNA]</scope>
    <source>
        <strain>Patoc 1 / ATCC 23582 / Paris</strain>
    </source>
</reference>
<sequence>MANIYYDDSCDLNLLKGKTIAVIGYGSQGHAQAQNMKDSGLKVIIGLRDGSKSVKEAKEAGFEVYNVAEASKKADIIQILAPDTIQADMYKADIEPNLSEGKALVFSHGFNIHYDLITPPKNVDVYMVAPKGPGHLVRRVYTEGGGVPCLIAIYQDATGQAKARALAHASGVGGGRAGILETSFREETETDLFGEQAVLCGGVANLIMSGFETLTEAGYDPEIAYFECLHEVKLITDLIYEGGLARMRFSISDTAEYGDYISGPRVIDAGVKARMKDVLTDIQKDKGAAFAKRWMADTKAGYPEYKKLKEKNAAHPIEAVGTKLRSMMKWLAK</sequence>